<gene>
    <name type="primary">fap1</name>
    <name type="ORF">SPCC18.03</name>
</gene>
<keyword id="KW-0963">Cytoplasm</keyword>
<keyword id="KW-0333">Golgi apparatus</keyword>
<keyword id="KW-0479">Metal-binding</keyword>
<keyword id="KW-0539">Nucleus</keyword>
<keyword id="KW-0597">Phosphoprotein</keyword>
<keyword id="KW-1185">Reference proteome</keyword>
<keyword id="KW-0677">Repeat</keyword>
<keyword id="KW-0804">Transcription</keyword>
<keyword id="KW-0805">Transcription regulation</keyword>
<keyword id="KW-0862">Zinc</keyword>
<keyword id="KW-0863">Zinc-finger</keyword>
<proteinExistence type="evidence at protein level"/>
<feature type="chain" id="PRO_0000317322" description="FKBP12-associated protein 1 homolog">
    <location>
        <begin position="1"/>
        <end position="1077"/>
    </location>
</feature>
<feature type="domain" description="R3H" evidence="3">
    <location>
        <begin position="835"/>
        <end position="897"/>
    </location>
</feature>
<feature type="zinc finger region" description="RING-type; atypical" evidence="2">
    <location>
        <begin position="197"/>
        <end position="247"/>
    </location>
</feature>
<feature type="zinc finger region" description="NF-X1-type 1">
    <location>
        <begin position="290"/>
        <end position="308"/>
    </location>
</feature>
<feature type="zinc finger region" description="NF-X1-type 2">
    <location>
        <begin position="348"/>
        <end position="367"/>
    </location>
</feature>
<feature type="zinc finger region" description="NF-X1-type 3">
    <location>
        <begin position="420"/>
        <end position="441"/>
    </location>
</feature>
<feature type="zinc finger region" description="NF-X1-type 4">
    <location>
        <begin position="485"/>
        <end position="503"/>
    </location>
</feature>
<feature type="zinc finger region" description="NF-X1-type 5">
    <location>
        <begin position="541"/>
        <end position="558"/>
    </location>
</feature>
<feature type="zinc finger region" description="NF-X1-type 6">
    <location>
        <begin position="595"/>
        <end position="614"/>
    </location>
</feature>
<feature type="zinc finger region" description="NF-X1-type 7">
    <location>
        <begin position="708"/>
        <end position="729"/>
    </location>
</feature>
<feature type="zinc finger region" description="NF-X1-type 8">
    <location>
        <begin position="738"/>
        <end position="760"/>
    </location>
</feature>
<feature type="region of interest" description="Disordered" evidence="4">
    <location>
        <begin position="1"/>
        <end position="173"/>
    </location>
</feature>
<feature type="compositionally biased region" description="Basic residues" evidence="4">
    <location>
        <begin position="15"/>
        <end position="29"/>
    </location>
</feature>
<feature type="compositionally biased region" description="Basic and acidic residues" evidence="4">
    <location>
        <begin position="52"/>
        <end position="64"/>
    </location>
</feature>
<feature type="compositionally biased region" description="Polar residues" evidence="4">
    <location>
        <begin position="76"/>
        <end position="87"/>
    </location>
</feature>
<feature type="compositionally biased region" description="Basic and acidic residues" evidence="4">
    <location>
        <begin position="100"/>
        <end position="116"/>
    </location>
</feature>
<feature type="compositionally biased region" description="Low complexity" evidence="4">
    <location>
        <begin position="136"/>
        <end position="149"/>
    </location>
</feature>
<feature type="compositionally biased region" description="Basic and acidic residues" evidence="4">
    <location>
        <begin position="153"/>
        <end position="173"/>
    </location>
</feature>
<feature type="modified residue" description="Phosphoserine" evidence="6">
    <location>
        <position position="33"/>
    </location>
</feature>
<name>FAP1H_SCHPO</name>
<organism>
    <name type="scientific">Schizosaccharomyces pombe (strain 972 / ATCC 24843)</name>
    <name type="common">Fission yeast</name>
    <dbReference type="NCBI Taxonomy" id="284812"/>
    <lineage>
        <taxon>Eukaryota</taxon>
        <taxon>Fungi</taxon>
        <taxon>Dikarya</taxon>
        <taxon>Ascomycota</taxon>
        <taxon>Taphrinomycotina</taxon>
        <taxon>Schizosaccharomycetes</taxon>
        <taxon>Schizosaccharomycetales</taxon>
        <taxon>Schizosaccharomycetaceae</taxon>
        <taxon>Schizosaccharomyces</taxon>
    </lineage>
</organism>
<reference key="1">
    <citation type="journal article" date="2002" name="Nature">
        <title>The genome sequence of Schizosaccharomyces pombe.</title>
        <authorList>
            <person name="Wood V."/>
            <person name="Gwilliam R."/>
            <person name="Rajandream M.A."/>
            <person name="Lyne M.H."/>
            <person name="Lyne R."/>
            <person name="Stewart A."/>
            <person name="Sgouros J.G."/>
            <person name="Peat N."/>
            <person name="Hayles J."/>
            <person name="Baker S.G."/>
            <person name="Basham D."/>
            <person name="Bowman S."/>
            <person name="Brooks K."/>
            <person name="Brown D."/>
            <person name="Brown S."/>
            <person name="Chillingworth T."/>
            <person name="Churcher C.M."/>
            <person name="Collins M."/>
            <person name="Connor R."/>
            <person name="Cronin A."/>
            <person name="Davis P."/>
            <person name="Feltwell T."/>
            <person name="Fraser A."/>
            <person name="Gentles S."/>
            <person name="Goble A."/>
            <person name="Hamlin N."/>
            <person name="Harris D.E."/>
            <person name="Hidalgo J."/>
            <person name="Hodgson G."/>
            <person name="Holroyd S."/>
            <person name="Hornsby T."/>
            <person name="Howarth S."/>
            <person name="Huckle E.J."/>
            <person name="Hunt S."/>
            <person name="Jagels K."/>
            <person name="James K.D."/>
            <person name="Jones L."/>
            <person name="Jones M."/>
            <person name="Leather S."/>
            <person name="McDonald S."/>
            <person name="McLean J."/>
            <person name="Mooney P."/>
            <person name="Moule S."/>
            <person name="Mungall K.L."/>
            <person name="Murphy L.D."/>
            <person name="Niblett D."/>
            <person name="Odell C."/>
            <person name="Oliver K."/>
            <person name="O'Neil S."/>
            <person name="Pearson D."/>
            <person name="Quail M.A."/>
            <person name="Rabbinowitsch E."/>
            <person name="Rutherford K.M."/>
            <person name="Rutter S."/>
            <person name="Saunders D."/>
            <person name="Seeger K."/>
            <person name="Sharp S."/>
            <person name="Skelton J."/>
            <person name="Simmonds M.N."/>
            <person name="Squares R."/>
            <person name="Squares S."/>
            <person name="Stevens K."/>
            <person name="Taylor K."/>
            <person name="Taylor R.G."/>
            <person name="Tivey A."/>
            <person name="Walsh S.V."/>
            <person name="Warren T."/>
            <person name="Whitehead S."/>
            <person name="Woodward J.R."/>
            <person name="Volckaert G."/>
            <person name="Aert R."/>
            <person name="Robben J."/>
            <person name="Grymonprez B."/>
            <person name="Weltjens I."/>
            <person name="Vanstreels E."/>
            <person name="Rieger M."/>
            <person name="Schaefer M."/>
            <person name="Mueller-Auer S."/>
            <person name="Gabel C."/>
            <person name="Fuchs M."/>
            <person name="Duesterhoeft A."/>
            <person name="Fritzc C."/>
            <person name="Holzer E."/>
            <person name="Moestl D."/>
            <person name="Hilbert H."/>
            <person name="Borzym K."/>
            <person name="Langer I."/>
            <person name="Beck A."/>
            <person name="Lehrach H."/>
            <person name="Reinhardt R."/>
            <person name="Pohl T.M."/>
            <person name="Eger P."/>
            <person name="Zimmermann W."/>
            <person name="Wedler H."/>
            <person name="Wambutt R."/>
            <person name="Purnelle B."/>
            <person name="Goffeau A."/>
            <person name="Cadieu E."/>
            <person name="Dreano S."/>
            <person name="Gloux S."/>
            <person name="Lelaure V."/>
            <person name="Mottier S."/>
            <person name="Galibert F."/>
            <person name="Aves S.J."/>
            <person name="Xiang Z."/>
            <person name="Hunt C."/>
            <person name="Moore K."/>
            <person name="Hurst S.M."/>
            <person name="Lucas M."/>
            <person name="Rochet M."/>
            <person name="Gaillardin C."/>
            <person name="Tallada V.A."/>
            <person name="Garzon A."/>
            <person name="Thode G."/>
            <person name="Daga R.R."/>
            <person name="Cruzado L."/>
            <person name="Jimenez J."/>
            <person name="Sanchez M."/>
            <person name="del Rey F."/>
            <person name="Benito J."/>
            <person name="Dominguez A."/>
            <person name="Revuelta J.L."/>
            <person name="Moreno S."/>
            <person name="Armstrong J."/>
            <person name="Forsburg S.L."/>
            <person name="Cerutti L."/>
            <person name="Lowe T."/>
            <person name="McCombie W.R."/>
            <person name="Paulsen I."/>
            <person name="Potashkin J."/>
            <person name="Shpakovski G.V."/>
            <person name="Ussery D."/>
            <person name="Barrell B.G."/>
            <person name="Nurse P."/>
        </authorList>
    </citation>
    <scope>NUCLEOTIDE SEQUENCE [LARGE SCALE GENOMIC DNA]</scope>
    <source>
        <strain>972 / ATCC 24843</strain>
    </source>
</reference>
<reference key="2">
    <citation type="journal article" date="2006" name="Nat. Biotechnol.">
        <title>ORFeome cloning and global analysis of protein localization in the fission yeast Schizosaccharomyces pombe.</title>
        <authorList>
            <person name="Matsuyama A."/>
            <person name="Arai R."/>
            <person name="Yashiroda Y."/>
            <person name="Shirai A."/>
            <person name="Kamata A."/>
            <person name="Sekido S."/>
            <person name="Kobayashi Y."/>
            <person name="Hashimoto A."/>
            <person name="Hamamoto M."/>
            <person name="Hiraoka Y."/>
            <person name="Horinouchi S."/>
            <person name="Yoshida M."/>
        </authorList>
    </citation>
    <scope>SUBCELLULAR LOCATION [LARGE SCALE ANALYSIS]</scope>
</reference>
<reference key="3">
    <citation type="journal article" date="2008" name="J. Proteome Res.">
        <title>Phosphoproteome analysis of fission yeast.</title>
        <authorList>
            <person name="Wilson-Grady J.T."/>
            <person name="Villen J."/>
            <person name="Gygi S.P."/>
        </authorList>
    </citation>
    <scope>PHOSPHORYLATION [LARGE SCALE ANALYSIS] AT SER-33</scope>
    <scope>IDENTIFICATION BY MASS SPECTROMETRY</scope>
</reference>
<comment type="function">
    <text evidence="1">May play a role in transcription regulation.</text>
</comment>
<comment type="subcellular location">
    <subcellularLocation>
        <location evidence="5">Cytoplasm</location>
    </subcellularLocation>
    <subcellularLocation>
        <location evidence="5">Golgi apparatus</location>
    </subcellularLocation>
    <subcellularLocation>
        <location evidence="1">Nucleus</location>
    </subcellularLocation>
</comment>
<comment type="similarity">
    <text evidence="7">Belongs to the NFX1 family.</text>
</comment>
<dbReference type="EMBL" id="CU329672">
    <property type="protein sequence ID" value="CAA21417.1"/>
    <property type="molecule type" value="Genomic_DNA"/>
</dbReference>
<dbReference type="PIR" id="T41146">
    <property type="entry name" value="T41146"/>
</dbReference>
<dbReference type="RefSeq" id="NP_588382.1">
    <property type="nucleotide sequence ID" value="NM_001023373.2"/>
</dbReference>
<dbReference type="SMR" id="O74853"/>
<dbReference type="FunCoup" id="O74853">
    <property type="interactions" value="904"/>
</dbReference>
<dbReference type="STRING" id="284812.O74853"/>
<dbReference type="iPTMnet" id="O74853"/>
<dbReference type="PaxDb" id="4896-SPCC18.03.1"/>
<dbReference type="EnsemblFungi" id="SPCC18.03.1">
    <property type="protein sequence ID" value="SPCC18.03.1:pep"/>
    <property type="gene ID" value="SPCC18.03"/>
</dbReference>
<dbReference type="KEGG" id="spo:2538928"/>
<dbReference type="PomBase" id="SPCC18.03"/>
<dbReference type="VEuPathDB" id="FungiDB:SPCC18.03"/>
<dbReference type="eggNOG" id="KOG1952">
    <property type="taxonomic scope" value="Eukaryota"/>
</dbReference>
<dbReference type="HOGENOM" id="CLU_005714_2_2_1"/>
<dbReference type="InParanoid" id="O74853"/>
<dbReference type="OMA" id="CPHPCDS"/>
<dbReference type="PhylomeDB" id="O74853"/>
<dbReference type="PRO" id="PR:O74853"/>
<dbReference type="Proteomes" id="UP000002485">
    <property type="component" value="Chromosome III"/>
</dbReference>
<dbReference type="GO" id="GO:0005694">
    <property type="term" value="C:chromosome"/>
    <property type="evidence" value="ECO:0007669"/>
    <property type="project" value="UniProtKB-ARBA"/>
</dbReference>
<dbReference type="GO" id="GO:0005829">
    <property type="term" value="C:cytosol"/>
    <property type="evidence" value="ECO:0007005"/>
    <property type="project" value="PomBase"/>
</dbReference>
<dbReference type="GO" id="GO:0005794">
    <property type="term" value="C:Golgi apparatus"/>
    <property type="evidence" value="ECO:0007005"/>
    <property type="project" value="PomBase"/>
</dbReference>
<dbReference type="GO" id="GO:0005634">
    <property type="term" value="C:nucleus"/>
    <property type="evidence" value="ECO:0000318"/>
    <property type="project" value="GO_Central"/>
</dbReference>
<dbReference type="GO" id="GO:0000981">
    <property type="term" value="F:DNA-binding transcription factor activity, RNA polymerase II-specific"/>
    <property type="evidence" value="ECO:0000318"/>
    <property type="project" value="GO_Central"/>
</dbReference>
<dbReference type="GO" id="GO:0000977">
    <property type="term" value="F:RNA polymerase II transcription regulatory region sequence-specific DNA binding"/>
    <property type="evidence" value="ECO:0000318"/>
    <property type="project" value="GO_Central"/>
</dbReference>
<dbReference type="GO" id="GO:0008270">
    <property type="term" value="F:zinc ion binding"/>
    <property type="evidence" value="ECO:0000255"/>
    <property type="project" value="PomBase"/>
</dbReference>
<dbReference type="GO" id="GO:0000122">
    <property type="term" value="P:negative regulation of transcription by RNA polymerase II"/>
    <property type="evidence" value="ECO:0000318"/>
    <property type="project" value="GO_Central"/>
</dbReference>
<dbReference type="CDD" id="cd06008">
    <property type="entry name" value="NF-X1-zinc-finger"/>
    <property type="match status" value="5"/>
</dbReference>
<dbReference type="CDD" id="cd06006">
    <property type="entry name" value="R3H_unknown_2"/>
    <property type="match status" value="1"/>
</dbReference>
<dbReference type="CDD" id="cd16492">
    <property type="entry name" value="RING-CH-C4HC3_NFX1-like"/>
    <property type="match status" value="1"/>
</dbReference>
<dbReference type="Gene3D" id="3.30.1370.50">
    <property type="entry name" value="R3H-like domain"/>
    <property type="match status" value="1"/>
</dbReference>
<dbReference type="InterPro" id="IPR034078">
    <property type="entry name" value="NFX1_fam"/>
</dbReference>
<dbReference type="InterPro" id="IPR001374">
    <property type="entry name" value="R3H_dom"/>
</dbReference>
<dbReference type="InterPro" id="IPR036867">
    <property type="entry name" value="R3H_dom_sf"/>
</dbReference>
<dbReference type="InterPro" id="IPR034077">
    <property type="entry name" value="R3H_FAP1"/>
</dbReference>
<dbReference type="InterPro" id="IPR019786">
    <property type="entry name" value="Zinc_finger_PHD-type_CS"/>
</dbReference>
<dbReference type="InterPro" id="IPR000967">
    <property type="entry name" value="Znf_NFX1"/>
</dbReference>
<dbReference type="InterPro" id="IPR019787">
    <property type="entry name" value="Znf_PHD-finger"/>
</dbReference>
<dbReference type="InterPro" id="IPR001841">
    <property type="entry name" value="Znf_RING"/>
</dbReference>
<dbReference type="PANTHER" id="PTHR12360">
    <property type="entry name" value="NUCLEAR TRANSCRIPTION FACTOR, X-BOX BINDING 1 NFX1"/>
    <property type="match status" value="1"/>
</dbReference>
<dbReference type="PANTHER" id="PTHR12360:SF12">
    <property type="entry name" value="TRANSCRIPTIONAL REPRESSOR NF-X1"/>
    <property type="match status" value="1"/>
</dbReference>
<dbReference type="Pfam" id="PF01424">
    <property type="entry name" value="R3H"/>
    <property type="match status" value="1"/>
</dbReference>
<dbReference type="Pfam" id="PF01422">
    <property type="entry name" value="zf-NF-X1"/>
    <property type="match status" value="7"/>
</dbReference>
<dbReference type="SMART" id="SM00393">
    <property type="entry name" value="R3H"/>
    <property type="match status" value="1"/>
</dbReference>
<dbReference type="SMART" id="SM00438">
    <property type="entry name" value="ZnF_NFX"/>
    <property type="match status" value="8"/>
</dbReference>
<dbReference type="SUPFAM" id="SSF82708">
    <property type="entry name" value="R3H domain"/>
    <property type="match status" value="1"/>
</dbReference>
<dbReference type="SUPFAM" id="SSF57850">
    <property type="entry name" value="RING/U-box"/>
    <property type="match status" value="1"/>
</dbReference>
<dbReference type="PROSITE" id="PS51061">
    <property type="entry name" value="R3H"/>
    <property type="match status" value="1"/>
</dbReference>
<dbReference type="PROSITE" id="PS50089">
    <property type="entry name" value="ZF_RING_2"/>
    <property type="match status" value="1"/>
</dbReference>
<protein>
    <recommendedName>
        <fullName>FKBP12-associated protein 1 homolog</fullName>
    </recommendedName>
</protein>
<accession>O74853</accession>
<sequence length="1077" mass="121088">METSKNPSDLPKKPANVKKNRRRFQKSQKKSISPSSGSELPNFKTTISQNNEEVKTSLKEDSSKFHPSASAPIFVPTSSVQLNVSKNNGHKASDIVDAVSSKDEELRKHAKGEGKRSKNRKRSSKHSEKQAVDLKSSNSSQETSSSKGSVNNKSERSREAKSRMPKNSKEIKKGLDLSKLDMTSRMIVELKNRLYECSVCTDTINPSTSIWSCGTCYHVFHLSCIRKWCKNSIEQRNEDAWRCPYCQSNQTETSLHYLCWCGKQEKPEFVKNLVPHSCGDPCGKTRGQDCEHPCPLLCHPGPCPPCTATVEKFCLCGKESIHARCSNISKVNTEPFRCENVCDELLPCGEHTCKKRCHSGLCGACFEPINAKCYCGLHSKTYPCSSLPSPSISKKDENGSVKEWFGYYSCNNPCTLFFDCGLHKCSKTCHPISETRAHCPFATDVLTKCPCGKEDISFLLKGHERKSCSDPIPTCENICGKLLSCGHRCKYKCHLGSCGTCSETLTIPCRCTANEVQVTCEQLQNGFIPTCERLCTILLSCGRHQCNKKCCSGYSKAQTRLARRPKGAKLRYHLLTEEFEEEHICFRPCNKKLSCGNHFCQHMCHRGPCPRCLEASFEELPCTCGRTRLYPPVACGTPIPDCPYLCVLPKSCHHPQVKHNCHPTSEPCPPCPYFVKKRCLCGKHILENQPCYRENVRCGELCNKLLSCKTHFCEKLCHPDGECESSCKKECGKRRMYCEHVCQSPCHAGHPCDERIPCKAPLEVSCECGRIRKKVTCDASYDNPDPQHKVSCTLECSQQQRNKLFAEALNIKTDRRSNDVAQYTKSLLVFYGKHSDFADEVESLLRNFVNNKASSFRFPSMRREQRAFVHMFAKLLGLESVSFDPEPKRNVMVYNKGEAKLPNMLLKEANLYHLQHPEIPLKPDSLLGPEEENATASHIDGSSNASDSGYNAFVLKELLKEVNDESAIFSVLDDIVDFNHLTWSILFGENYIILKPLNTDLIVNKTGKLVALRPLVNRRLADAGIASRCEICEINDKNEIVKTRSQRIHSKKKAFLSLVPDKSIGVINRYKELATEL</sequence>
<evidence type="ECO:0000250" key="1"/>
<evidence type="ECO:0000255" key="2">
    <source>
        <dbReference type="PROSITE-ProRule" id="PRU00175"/>
    </source>
</evidence>
<evidence type="ECO:0000255" key="3">
    <source>
        <dbReference type="PROSITE-ProRule" id="PRU00382"/>
    </source>
</evidence>
<evidence type="ECO:0000256" key="4">
    <source>
        <dbReference type="SAM" id="MobiDB-lite"/>
    </source>
</evidence>
<evidence type="ECO:0000269" key="5">
    <source>
    </source>
</evidence>
<evidence type="ECO:0000269" key="6">
    <source>
    </source>
</evidence>
<evidence type="ECO:0000305" key="7"/>